<feature type="initiator methionine" description="Removed" evidence="1">
    <location>
        <position position="1"/>
    </location>
</feature>
<feature type="chain" id="PRO_0000111362" description="Small ribosomal subunit protein uS9">
    <location>
        <begin position="2"/>
        <end position="130"/>
    </location>
</feature>
<comment type="function">
    <text>This protein is strongly recognized by antisera raised against H.somnus.</text>
</comment>
<comment type="function">
    <text>This protein complements an E.coli rpsI mutation.</text>
</comment>
<comment type="subunit">
    <text>Part of the 30S ribosomal subunit.</text>
</comment>
<comment type="similarity">
    <text evidence="2">Belongs to the universal ribosomal protein uS9 family.</text>
</comment>
<sequence>MAENQNYGTGRRKSSSARVFIKPGSGKIVINQRELDVYFGRETSRMIVRQPLELVELTDKLDLYVTVKGGGISGQAGAIRHGITRALIEYDETLRPALRAAGFVTRDARRVERKKIGLHKARRRPQYSKR</sequence>
<accession>P31782</accession>
<evidence type="ECO:0000250" key="1"/>
<evidence type="ECO:0000305" key="2"/>
<name>RS9_HISSO</name>
<gene>
    <name type="primary">rpsI</name>
</gene>
<organism>
    <name type="scientific">Histophilus somni</name>
    <name type="common">Haemophilus somnus</name>
    <dbReference type="NCBI Taxonomy" id="731"/>
    <lineage>
        <taxon>Bacteria</taxon>
        <taxon>Pseudomonadati</taxon>
        <taxon>Pseudomonadota</taxon>
        <taxon>Gammaproteobacteria</taxon>
        <taxon>Pasteurellales</taxon>
        <taxon>Pasteurellaceae</taxon>
        <taxon>Histophilus</taxon>
    </lineage>
</organism>
<keyword id="KW-0687">Ribonucleoprotein</keyword>
<keyword id="KW-0689">Ribosomal protein</keyword>
<dbReference type="EMBL" id="S75161">
    <property type="protein sequence ID" value="AAB20821.2"/>
    <property type="molecule type" value="Genomic_DNA"/>
</dbReference>
<dbReference type="PIR" id="B43310">
    <property type="entry name" value="B43310"/>
</dbReference>
<dbReference type="RefSeq" id="WP_011608906.1">
    <property type="nucleotide sequence ID" value="NZ_SUKB01000017.1"/>
</dbReference>
<dbReference type="SMR" id="P31782"/>
<dbReference type="GeneID" id="31487523"/>
<dbReference type="OMA" id="KFQFSKR"/>
<dbReference type="OrthoDB" id="9803965at2"/>
<dbReference type="GO" id="GO:0022627">
    <property type="term" value="C:cytosolic small ribosomal subunit"/>
    <property type="evidence" value="ECO:0007669"/>
    <property type="project" value="TreeGrafter"/>
</dbReference>
<dbReference type="GO" id="GO:0003723">
    <property type="term" value="F:RNA binding"/>
    <property type="evidence" value="ECO:0007669"/>
    <property type="project" value="TreeGrafter"/>
</dbReference>
<dbReference type="GO" id="GO:0003735">
    <property type="term" value="F:structural constituent of ribosome"/>
    <property type="evidence" value="ECO:0007669"/>
    <property type="project" value="InterPro"/>
</dbReference>
<dbReference type="GO" id="GO:0006412">
    <property type="term" value="P:translation"/>
    <property type="evidence" value="ECO:0007669"/>
    <property type="project" value="UniProtKB-UniRule"/>
</dbReference>
<dbReference type="FunFam" id="3.30.230.10:FF:000001">
    <property type="entry name" value="30S ribosomal protein S9"/>
    <property type="match status" value="1"/>
</dbReference>
<dbReference type="Gene3D" id="3.30.230.10">
    <property type="match status" value="1"/>
</dbReference>
<dbReference type="HAMAP" id="MF_00532_B">
    <property type="entry name" value="Ribosomal_uS9_B"/>
    <property type="match status" value="1"/>
</dbReference>
<dbReference type="InterPro" id="IPR020568">
    <property type="entry name" value="Ribosomal_Su5_D2-typ_SF"/>
</dbReference>
<dbReference type="InterPro" id="IPR000754">
    <property type="entry name" value="Ribosomal_uS9"/>
</dbReference>
<dbReference type="InterPro" id="IPR023035">
    <property type="entry name" value="Ribosomal_uS9_bac/plastid"/>
</dbReference>
<dbReference type="InterPro" id="IPR020574">
    <property type="entry name" value="Ribosomal_uS9_CS"/>
</dbReference>
<dbReference type="InterPro" id="IPR014721">
    <property type="entry name" value="Ribsml_uS5_D2-typ_fold_subgr"/>
</dbReference>
<dbReference type="NCBIfam" id="NF001099">
    <property type="entry name" value="PRK00132.1"/>
    <property type="match status" value="1"/>
</dbReference>
<dbReference type="PANTHER" id="PTHR21569">
    <property type="entry name" value="RIBOSOMAL PROTEIN S9"/>
    <property type="match status" value="1"/>
</dbReference>
<dbReference type="PANTHER" id="PTHR21569:SF1">
    <property type="entry name" value="SMALL RIBOSOMAL SUBUNIT PROTEIN US9M"/>
    <property type="match status" value="1"/>
</dbReference>
<dbReference type="Pfam" id="PF00380">
    <property type="entry name" value="Ribosomal_S9"/>
    <property type="match status" value="1"/>
</dbReference>
<dbReference type="SUPFAM" id="SSF54211">
    <property type="entry name" value="Ribosomal protein S5 domain 2-like"/>
    <property type="match status" value="1"/>
</dbReference>
<dbReference type="PROSITE" id="PS00360">
    <property type="entry name" value="RIBOSOMAL_S9"/>
    <property type="match status" value="1"/>
</dbReference>
<proteinExistence type="inferred from homology"/>
<protein>
    <recommendedName>
        <fullName evidence="2">Small ribosomal subunit protein uS9</fullName>
    </recommendedName>
    <alternativeName>
        <fullName>30S ribosomal protein S9</fullName>
    </alternativeName>
</protein>
<reference key="1">
    <citation type="journal article" date="1992" name="J. Bacteriol.">
        <title>Cloning, sequencing, expression, and functional studies of a 15,000-molecular-weight Haemophilus somnus antigen similar to Escherichia coli ribosomal protein S9.</title>
        <authorList>
            <person name="Theisen M."/>
            <person name="Potter A.A."/>
        </authorList>
    </citation>
    <scope>NUCLEOTIDE SEQUENCE [GENOMIC DNA]</scope>
    <scope>IDENTIFICATION AS AN ANTI-HAEMOPHILUS ANTIGEN</scope>
    <scope>RIBOSOMAL LOCALIZATION</scope>
    <source>
        <strain>HS25</strain>
    </source>
</reference>